<evidence type="ECO:0000255" key="1">
    <source>
        <dbReference type="HAMAP-Rule" id="MF_00787"/>
    </source>
</evidence>
<feature type="chain" id="PRO_0000257762" description="Cobalt-precorrin-5B C(1)-methyltransferase">
    <location>
        <begin position="1"/>
        <end position="372"/>
    </location>
</feature>
<keyword id="KW-0169">Cobalamin biosynthesis</keyword>
<keyword id="KW-0489">Methyltransferase</keyword>
<keyword id="KW-1185">Reference proteome</keyword>
<keyword id="KW-0949">S-adenosyl-L-methionine</keyword>
<keyword id="KW-0808">Transferase</keyword>
<gene>
    <name evidence="1" type="primary">cbiD</name>
    <name type="ordered locus">GK1801</name>
</gene>
<comment type="function">
    <text evidence="1">Catalyzes the methylation of C-1 in cobalt-precorrin-5B to form cobalt-precorrin-6A.</text>
</comment>
<comment type="catalytic activity">
    <reaction evidence="1">
        <text>Co-precorrin-5B + S-adenosyl-L-methionine = Co-precorrin-6A + S-adenosyl-L-homocysteine</text>
        <dbReference type="Rhea" id="RHEA:26285"/>
        <dbReference type="ChEBI" id="CHEBI:57856"/>
        <dbReference type="ChEBI" id="CHEBI:59789"/>
        <dbReference type="ChEBI" id="CHEBI:60063"/>
        <dbReference type="ChEBI" id="CHEBI:60064"/>
        <dbReference type="EC" id="2.1.1.195"/>
    </reaction>
</comment>
<comment type="pathway">
    <text evidence="1">Cofactor biosynthesis; adenosylcobalamin biosynthesis; cob(II)yrinate a,c-diamide from sirohydrochlorin (anaerobic route): step 6/10.</text>
</comment>
<comment type="similarity">
    <text evidence="1">Belongs to the CbiD family.</text>
</comment>
<reference key="1">
    <citation type="journal article" date="2004" name="Nucleic Acids Res.">
        <title>Thermoadaptation trait revealed by the genome sequence of thermophilic Geobacillus kaustophilus.</title>
        <authorList>
            <person name="Takami H."/>
            <person name="Takaki Y."/>
            <person name="Chee G.-J."/>
            <person name="Nishi S."/>
            <person name="Shimamura S."/>
            <person name="Suzuki H."/>
            <person name="Matsui S."/>
            <person name="Uchiyama I."/>
        </authorList>
    </citation>
    <scope>NUCLEOTIDE SEQUENCE [LARGE SCALE GENOMIC DNA]</scope>
    <source>
        <strain>HTA426</strain>
    </source>
</reference>
<name>CBID_GEOKA</name>
<dbReference type="EC" id="2.1.1.195" evidence="1"/>
<dbReference type="EMBL" id="BA000043">
    <property type="protein sequence ID" value="BAD76086.1"/>
    <property type="molecule type" value="Genomic_DNA"/>
</dbReference>
<dbReference type="RefSeq" id="WP_011231291.1">
    <property type="nucleotide sequence ID" value="NC_006510.1"/>
</dbReference>
<dbReference type="SMR" id="Q5KZ00"/>
<dbReference type="STRING" id="235909.GK1801"/>
<dbReference type="KEGG" id="gka:GK1801"/>
<dbReference type="eggNOG" id="COG1903">
    <property type="taxonomic scope" value="Bacteria"/>
</dbReference>
<dbReference type="HOGENOM" id="CLU_041273_0_0_9"/>
<dbReference type="UniPathway" id="UPA00148">
    <property type="reaction ID" value="UER00227"/>
</dbReference>
<dbReference type="Proteomes" id="UP000001172">
    <property type="component" value="Chromosome"/>
</dbReference>
<dbReference type="GO" id="GO:0043780">
    <property type="term" value="F:cobalt-precorrin-5B C1-methyltransferase activity"/>
    <property type="evidence" value="ECO:0007669"/>
    <property type="project" value="RHEA"/>
</dbReference>
<dbReference type="GO" id="GO:0019251">
    <property type="term" value="P:anaerobic cobalamin biosynthetic process"/>
    <property type="evidence" value="ECO:0007669"/>
    <property type="project" value="UniProtKB-UniRule"/>
</dbReference>
<dbReference type="GO" id="GO:0032259">
    <property type="term" value="P:methylation"/>
    <property type="evidence" value="ECO:0007669"/>
    <property type="project" value="UniProtKB-KW"/>
</dbReference>
<dbReference type="Gene3D" id="3.30.2110.10">
    <property type="entry name" value="CbiD-like"/>
    <property type="match status" value="1"/>
</dbReference>
<dbReference type="HAMAP" id="MF_00787">
    <property type="entry name" value="CbiD"/>
    <property type="match status" value="1"/>
</dbReference>
<dbReference type="InterPro" id="IPR002748">
    <property type="entry name" value="CbiD"/>
</dbReference>
<dbReference type="InterPro" id="IPR036074">
    <property type="entry name" value="CbiD_sf"/>
</dbReference>
<dbReference type="NCBIfam" id="TIGR00312">
    <property type="entry name" value="cbiD"/>
    <property type="match status" value="1"/>
</dbReference>
<dbReference type="NCBIfam" id="NF000849">
    <property type="entry name" value="PRK00075.1-1"/>
    <property type="match status" value="1"/>
</dbReference>
<dbReference type="PANTHER" id="PTHR35863">
    <property type="entry name" value="COBALT-PRECORRIN-5B C(1)-METHYLTRANSFERASE"/>
    <property type="match status" value="1"/>
</dbReference>
<dbReference type="PANTHER" id="PTHR35863:SF1">
    <property type="entry name" value="COBALT-PRECORRIN-5B C(1)-METHYLTRANSFERASE"/>
    <property type="match status" value="1"/>
</dbReference>
<dbReference type="Pfam" id="PF01888">
    <property type="entry name" value="CbiD"/>
    <property type="match status" value="1"/>
</dbReference>
<dbReference type="PIRSF" id="PIRSF026782">
    <property type="entry name" value="CbiD"/>
    <property type="match status" value="1"/>
</dbReference>
<dbReference type="SUPFAM" id="SSF111342">
    <property type="entry name" value="CbiD-like"/>
    <property type="match status" value="1"/>
</dbReference>
<proteinExistence type="inferred from homology"/>
<protein>
    <recommendedName>
        <fullName evidence="1">Cobalt-precorrin-5B C(1)-methyltransferase</fullName>
        <ecNumber evidence="1">2.1.1.195</ecNumber>
    </recommendedName>
    <alternativeName>
        <fullName evidence="1">Cobalt-precorrin-6A synthase</fullName>
    </alternativeName>
</protein>
<organism>
    <name type="scientific">Geobacillus kaustophilus (strain HTA426)</name>
    <dbReference type="NCBI Taxonomy" id="235909"/>
    <lineage>
        <taxon>Bacteria</taxon>
        <taxon>Bacillati</taxon>
        <taxon>Bacillota</taxon>
        <taxon>Bacilli</taxon>
        <taxon>Bacillales</taxon>
        <taxon>Anoxybacillaceae</taxon>
        <taxon>Geobacillus</taxon>
        <taxon>Geobacillus thermoleovorans group</taxon>
    </lineage>
</organism>
<sequence length="372" mass="38665">METKKTLREGYTTGSCAAAATKAALTALITGQVQTDATIRLPIGRVVTFSLASCSFEGETATAAVVKDGGDDPDATHGALIVSTVSWASSPGVHIDGGEGVGRVTKPGLPVPVGEAAINPVPRQMIREAVNEVLAQYGLHRGVKVVISVPGGEEIAKKTLNPRLGIMGGISILGTRGIVVPFSTAAYRASIVQALQVAKANGCRHVVITTGGRSEKYAMQEYPHLPEEAFIEMGDFVGFTLKQCKRLGIKMVSMVGMMGKFSKVAQGVMMVHSKSAPVDFGFLAALAEQAGASSALVAAVRGANTAAQVGDMMQEAGCTKFFELLCEACCRAALNEVGGGLTVATSIYTMNGQRLGKAVQIDGDDETDRRGS</sequence>
<accession>Q5KZ00</accession>